<name>TRPA_YERPB</name>
<sequence length="268" mass="28593">MERYQQLFKQLAAKKEGAFVPFVQLGDPSPAMSLNIIDTLIAAGADALELGIPFSDPLADGPTIQNAALRAFAAGVTPAICFEILAEIRQKHPTIPIGLLMYANLVFHNGIDHFYQRCAEVGVDSVLIADVPFEESAPFRAAALRHGIAPIFICPPNADDDLLREIASHGRGYTYLLSRAGVTGAENHGQLPLNHLVDKLREYNAAPALQGFGISEPAQVKASLAAGAAGAISGSAIVKIIEKNVAQPVEMLVQLTRFVTEMKAATRS</sequence>
<gene>
    <name evidence="1" type="primary">trpA</name>
    <name type="ordered locus">YPTS_2196</name>
</gene>
<dbReference type="EC" id="4.2.1.20" evidence="1"/>
<dbReference type="EMBL" id="CP001048">
    <property type="protein sequence ID" value="ACC89157.1"/>
    <property type="molecule type" value="Genomic_DNA"/>
</dbReference>
<dbReference type="RefSeq" id="WP_011192442.1">
    <property type="nucleotide sequence ID" value="NZ_CP009780.1"/>
</dbReference>
<dbReference type="SMR" id="B2K3W1"/>
<dbReference type="KEGG" id="ypb:YPTS_2196"/>
<dbReference type="PATRIC" id="fig|502801.10.peg.1585"/>
<dbReference type="UniPathway" id="UPA00035">
    <property type="reaction ID" value="UER00044"/>
</dbReference>
<dbReference type="GO" id="GO:0005829">
    <property type="term" value="C:cytosol"/>
    <property type="evidence" value="ECO:0007669"/>
    <property type="project" value="TreeGrafter"/>
</dbReference>
<dbReference type="GO" id="GO:0004834">
    <property type="term" value="F:tryptophan synthase activity"/>
    <property type="evidence" value="ECO:0007669"/>
    <property type="project" value="UniProtKB-UniRule"/>
</dbReference>
<dbReference type="CDD" id="cd04724">
    <property type="entry name" value="Tryptophan_synthase_alpha"/>
    <property type="match status" value="1"/>
</dbReference>
<dbReference type="FunFam" id="3.20.20.70:FF:000037">
    <property type="entry name" value="Tryptophan synthase alpha chain"/>
    <property type="match status" value="1"/>
</dbReference>
<dbReference type="Gene3D" id="3.20.20.70">
    <property type="entry name" value="Aldolase class I"/>
    <property type="match status" value="1"/>
</dbReference>
<dbReference type="HAMAP" id="MF_00131">
    <property type="entry name" value="Trp_synth_alpha"/>
    <property type="match status" value="1"/>
</dbReference>
<dbReference type="InterPro" id="IPR013785">
    <property type="entry name" value="Aldolase_TIM"/>
</dbReference>
<dbReference type="InterPro" id="IPR011060">
    <property type="entry name" value="RibuloseP-bd_barrel"/>
</dbReference>
<dbReference type="InterPro" id="IPR018204">
    <property type="entry name" value="Trp_synthase_alpha_AS"/>
</dbReference>
<dbReference type="InterPro" id="IPR002028">
    <property type="entry name" value="Trp_synthase_suA"/>
</dbReference>
<dbReference type="NCBIfam" id="TIGR00262">
    <property type="entry name" value="trpA"/>
    <property type="match status" value="1"/>
</dbReference>
<dbReference type="PANTHER" id="PTHR43406:SF1">
    <property type="entry name" value="TRYPTOPHAN SYNTHASE ALPHA CHAIN, CHLOROPLASTIC"/>
    <property type="match status" value="1"/>
</dbReference>
<dbReference type="PANTHER" id="PTHR43406">
    <property type="entry name" value="TRYPTOPHAN SYNTHASE, ALPHA CHAIN"/>
    <property type="match status" value="1"/>
</dbReference>
<dbReference type="Pfam" id="PF00290">
    <property type="entry name" value="Trp_syntA"/>
    <property type="match status" value="1"/>
</dbReference>
<dbReference type="SUPFAM" id="SSF51366">
    <property type="entry name" value="Ribulose-phoshate binding barrel"/>
    <property type="match status" value="1"/>
</dbReference>
<dbReference type="PROSITE" id="PS00167">
    <property type="entry name" value="TRP_SYNTHASE_ALPHA"/>
    <property type="match status" value="1"/>
</dbReference>
<accession>B2K3W1</accession>
<proteinExistence type="inferred from homology"/>
<comment type="function">
    <text evidence="1">The alpha subunit is responsible for the aldol cleavage of indoleglycerol phosphate to indole and glyceraldehyde 3-phosphate.</text>
</comment>
<comment type="catalytic activity">
    <reaction evidence="1">
        <text>(1S,2R)-1-C-(indol-3-yl)glycerol 3-phosphate + L-serine = D-glyceraldehyde 3-phosphate + L-tryptophan + H2O</text>
        <dbReference type="Rhea" id="RHEA:10532"/>
        <dbReference type="ChEBI" id="CHEBI:15377"/>
        <dbReference type="ChEBI" id="CHEBI:33384"/>
        <dbReference type="ChEBI" id="CHEBI:57912"/>
        <dbReference type="ChEBI" id="CHEBI:58866"/>
        <dbReference type="ChEBI" id="CHEBI:59776"/>
        <dbReference type="EC" id="4.2.1.20"/>
    </reaction>
</comment>
<comment type="pathway">
    <text evidence="1">Amino-acid biosynthesis; L-tryptophan biosynthesis; L-tryptophan from chorismate: step 5/5.</text>
</comment>
<comment type="subunit">
    <text evidence="1">Tetramer of two alpha and two beta chains.</text>
</comment>
<comment type="similarity">
    <text evidence="1">Belongs to the TrpA family.</text>
</comment>
<keyword id="KW-0028">Amino-acid biosynthesis</keyword>
<keyword id="KW-0057">Aromatic amino acid biosynthesis</keyword>
<keyword id="KW-0456">Lyase</keyword>
<keyword id="KW-0822">Tryptophan biosynthesis</keyword>
<evidence type="ECO:0000255" key="1">
    <source>
        <dbReference type="HAMAP-Rule" id="MF_00131"/>
    </source>
</evidence>
<protein>
    <recommendedName>
        <fullName evidence="1">Tryptophan synthase alpha chain</fullName>
        <ecNumber evidence="1">4.2.1.20</ecNumber>
    </recommendedName>
</protein>
<feature type="chain" id="PRO_1000095765" description="Tryptophan synthase alpha chain">
    <location>
        <begin position="1"/>
        <end position="268"/>
    </location>
</feature>
<feature type="active site" description="Proton acceptor" evidence="1">
    <location>
        <position position="49"/>
    </location>
</feature>
<feature type="active site" description="Proton acceptor" evidence="1">
    <location>
        <position position="60"/>
    </location>
</feature>
<organism>
    <name type="scientific">Yersinia pseudotuberculosis serotype IB (strain PB1/+)</name>
    <dbReference type="NCBI Taxonomy" id="502801"/>
    <lineage>
        <taxon>Bacteria</taxon>
        <taxon>Pseudomonadati</taxon>
        <taxon>Pseudomonadota</taxon>
        <taxon>Gammaproteobacteria</taxon>
        <taxon>Enterobacterales</taxon>
        <taxon>Yersiniaceae</taxon>
        <taxon>Yersinia</taxon>
    </lineage>
</organism>
<reference key="1">
    <citation type="submission" date="2008-04" db="EMBL/GenBank/DDBJ databases">
        <title>Complete sequence of Yersinia pseudotuberculosis PB1/+.</title>
        <authorList>
            <person name="Copeland A."/>
            <person name="Lucas S."/>
            <person name="Lapidus A."/>
            <person name="Glavina del Rio T."/>
            <person name="Dalin E."/>
            <person name="Tice H."/>
            <person name="Bruce D."/>
            <person name="Goodwin L."/>
            <person name="Pitluck S."/>
            <person name="Munk A.C."/>
            <person name="Brettin T."/>
            <person name="Detter J.C."/>
            <person name="Han C."/>
            <person name="Tapia R."/>
            <person name="Schmutz J."/>
            <person name="Larimer F."/>
            <person name="Land M."/>
            <person name="Hauser L."/>
            <person name="Challacombe J.F."/>
            <person name="Green L."/>
            <person name="Lindler L.E."/>
            <person name="Nikolich M.P."/>
            <person name="Richardson P."/>
        </authorList>
    </citation>
    <scope>NUCLEOTIDE SEQUENCE [LARGE SCALE GENOMIC DNA]</scope>
    <source>
        <strain>PB1/+</strain>
    </source>
</reference>